<dbReference type="EC" id="2.3.1.15" evidence="1"/>
<dbReference type="EC" id="2.3.1.n5" evidence="1"/>
<dbReference type="EMBL" id="CP001127">
    <property type="protein sequence ID" value="ACF90612.1"/>
    <property type="molecule type" value="Genomic_DNA"/>
</dbReference>
<dbReference type="RefSeq" id="WP_001272785.1">
    <property type="nucleotide sequence ID" value="NC_011094.1"/>
</dbReference>
<dbReference type="SMR" id="B4TVU1"/>
<dbReference type="KEGG" id="sew:SeSA_A3397"/>
<dbReference type="HOGENOM" id="CLU_081254_0_2_6"/>
<dbReference type="UniPathway" id="UPA00085"/>
<dbReference type="Proteomes" id="UP000001865">
    <property type="component" value="Chromosome"/>
</dbReference>
<dbReference type="GO" id="GO:0005886">
    <property type="term" value="C:plasma membrane"/>
    <property type="evidence" value="ECO:0007669"/>
    <property type="project" value="UniProtKB-SubCell"/>
</dbReference>
<dbReference type="GO" id="GO:0043772">
    <property type="term" value="F:acyl-phosphate glycerol-3-phosphate acyltransferase activity"/>
    <property type="evidence" value="ECO:0007669"/>
    <property type="project" value="InterPro"/>
</dbReference>
<dbReference type="GO" id="GO:0004366">
    <property type="term" value="F:glycerol-3-phosphate O-acyltransferase activity"/>
    <property type="evidence" value="ECO:0007669"/>
    <property type="project" value="UniProtKB-UniRule"/>
</dbReference>
<dbReference type="GO" id="GO:0008654">
    <property type="term" value="P:phospholipid biosynthetic process"/>
    <property type="evidence" value="ECO:0007669"/>
    <property type="project" value="UniProtKB-UniRule"/>
</dbReference>
<dbReference type="HAMAP" id="MF_01043">
    <property type="entry name" value="PlsY"/>
    <property type="match status" value="1"/>
</dbReference>
<dbReference type="InterPro" id="IPR003811">
    <property type="entry name" value="G3P_acylTferase_PlsY"/>
</dbReference>
<dbReference type="NCBIfam" id="TIGR00023">
    <property type="entry name" value="glycerol-3-phosphate 1-O-acyltransferase PlsY"/>
    <property type="match status" value="1"/>
</dbReference>
<dbReference type="PANTHER" id="PTHR30309:SF0">
    <property type="entry name" value="GLYCEROL-3-PHOSPHATE ACYLTRANSFERASE-RELATED"/>
    <property type="match status" value="1"/>
</dbReference>
<dbReference type="PANTHER" id="PTHR30309">
    <property type="entry name" value="INNER MEMBRANE PROTEIN YGIH"/>
    <property type="match status" value="1"/>
</dbReference>
<dbReference type="Pfam" id="PF02660">
    <property type="entry name" value="G3P_acyltransf"/>
    <property type="match status" value="1"/>
</dbReference>
<dbReference type="SMART" id="SM01207">
    <property type="entry name" value="G3P_acyltransf"/>
    <property type="match status" value="1"/>
</dbReference>
<protein>
    <recommendedName>
        <fullName evidence="1">Glycerol-3-phosphate acyltransferase</fullName>
    </recommendedName>
    <alternativeName>
        <fullName evidence="1">G3P acyltransferase</fullName>
        <shortName evidence="1">GPAT</shortName>
        <ecNumber evidence="1">2.3.1.15</ecNumber>
        <ecNumber evidence="1">2.3.1.n5</ecNumber>
    </alternativeName>
    <alternativeName>
        <fullName evidence="1">Lysophosphatidic acid synthase</fullName>
        <shortName evidence="1">LPA synthase</shortName>
    </alternativeName>
</protein>
<evidence type="ECO:0000255" key="1">
    <source>
        <dbReference type="HAMAP-Rule" id="MF_01043"/>
    </source>
</evidence>
<name>PLSY_SALSV</name>
<comment type="function">
    <text evidence="1">Catalyzes the transfer of an acyl group from acyl-ACP to glycerol-3-phosphate (G3P) to form lysophosphatidic acid (LPA). This enzyme can also utilize acyl-CoA as fatty acyl donor, but not acyl-PO(4).</text>
</comment>
<comment type="catalytic activity">
    <reaction evidence="1">
        <text>sn-glycerol 3-phosphate + an acyl-CoA = a 1-acyl-sn-glycero-3-phosphate + CoA</text>
        <dbReference type="Rhea" id="RHEA:15325"/>
        <dbReference type="ChEBI" id="CHEBI:57287"/>
        <dbReference type="ChEBI" id="CHEBI:57597"/>
        <dbReference type="ChEBI" id="CHEBI:57970"/>
        <dbReference type="ChEBI" id="CHEBI:58342"/>
        <dbReference type="EC" id="2.3.1.15"/>
    </reaction>
</comment>
<comment type="catalytic activity">
    <reaction evidence="1">
        <text>a fatty acyl-[ACP] + sn-glycerol 3-phosphate = a 1-acyl-sn-glycero-3-phosphate + holo-[ACP]</text>
        <dbReference type="Rhea" id="RHEA:42300"/>
        <dbReference type="Rhea" id="RHEA-COMP:9685"/>
        <dbReference type="Rhea" id="RHEA-COMP:14125"/>
        <dbReference type="ChEBI" id="CHEBI:57597"/>
        <dbReference type="ChEBI" id="CHEBI:57970"/>
        <dbReference type="ChEBI" id="CHEBI:64479"/>
        <dbReference type="ChEBI" id="CHEBI:138651"/>
        <dbReference type="EC" id="2.3.1.n5"/>
    </reaction>
</comment>
<comment type="pathway">
    <text evidence="1">Lipid metabolism; phospholipid metabolism.</text>
</comment>
<comment type="subunit">
    <text evidence="1">Probably interacts with PlsX.</text>
</comment>
<comment type="subcellular location">
    <subcellularLocation>
        <location evidence="1">Cell inner membrane</location>
        <topology evidence="1">Multi-pass membrane protein</topology>
    </subcellularLocation>
</comment>
<comment type="similarity">
    <text evidence="1">Belongs to the PlsY family.</text>
</comment>
<reference key="1">
    <citation type="journal article" date="2011" name="J. Bacteriol.">
        <title>Comparative genomics of 28 Salmonella enterica isolates: evidence for CRISPR-mediated adaptive sublineage evolution.</title>
        <authorList>
            <person name="Fricke W.F."/>
            <person name="Mammel M.K."/>
            <person name="McDermott P.F."/>
            <person name="Tartera C."/>
            <person name="White D.G."/>
            <person name="Leclerc J.E."/>
            <person name="Ravel J."/>
            <person name="Cebula T.A."/>
        </authorList>
    </citation>
    <scope>NUCLEOTIDE SEQUENCE [LARGE SCALE GENOMIC DNA]</scope>
    <source>
        <strain>CVM19633</strain>
    </source>
</reference>
<keyword id="KW-0997">Cell inner membrane</keyword>
<keyword id="KW-1003">Cell membrane</keyword>
<keyword id="KW-0444">Lipid biosynthesis</keyword>
<keyword id="KW-0443">Lipid metabolism</keyword>
<keyword id="KW-0472">Membrane</keyword>
<keyword id="KW-0594">Phospholipid biosynthesis</keyword>
<keyword id="KW-1208">Phospholipid metabolism</keyword>
<keyword id="KW-0808">Transferase</keyword>
<keyword id="KW-0812">Transmembrane</keyword>
<keyword id="KW-1133">Transmembrane helix</keyword>
<proteinExistence type="inferred from homology"/>
<sequence>MSAIAPGMILFAYLCGSISSAILVCRIAGLPDPRESGSGNPGATNVLRIGGKGAAVAVLIFDILKGMLPVWGAYALGVTPFWLGLIAIAACLGHIWPVFFGFKGGKGVATAFGAIAPIGWDLTGVMAGTWLLTVLLSGYSSLGAIVSALIAPFYVWWFKPQFTFPVSMLSCLILLRHHDNIQRLWRRQETKIWTKLKKKRQKDSE</sequence>
<accession>B4TVU1</accession>
<gene>
    <name evidence="1" type="primary">plsY</name>
    <name type="synonym">ygiH</name>
    <name type="ordered locus">SeSA_A3397</name>
</gene>
<organism>
    <name type="scientific">Salmonella schwarzengrund (strain CVM19633)</name>
    <dbReference type="NCBI Taxonomy" id="439843"/>
    <lineage>
        <taxon>Bacteria</taxon>
        <taxon>Pseudomonadati</taxon>
        <taxon>Pseudomonadota</taxon>
        <taxon>Gammaproteobacteria</taxon>
        <taxon>Enterobacterales</taxon>
        <taxon>Enterobacteriaceae</taxon>
        <taxon>Salmonella</taxon>
    </lineage>
</organism>
<feature type="chain" id="PRO_1000136121" description="Glycerol-3-phosphate acyltransferase">
    <location>
        <begin position="1"/>
        <end position="205"/>
    </location>
</feature>
<feature type="topological domain" description="Periplasmic" evidence="1">
    <location>
        <begin position="1"/>
        <end position="3"/>
    </location>
</feature>
<feature type="transmembrane region" description="Helical" evidence="1">
    <location>
        <begin position="4"/>
        <end position="24"/>
    </location>
</feature>
<feature type="topological domain" description="Cytoplasmic" evidence="1">
    <location>
        <begin position="25"/>
        <end position="52"/>
    </location>
</feature>
<feature type="transmembrane region" description="Helical" evidence="1">
    <location>
        <begin position="53"/>
        <end position="73"/>
    </location>
</feature>
<feature type="topological domain" description="Periplasmic" evidence="1">
    <location>
        <begin position="74"/>
        <end position="80"/>
    </location>
</feature>
<feature type="transmembrane region" description="Helical" evidence="1">
    <location>
        <begin position="81"/>
        <end position="101"/>
    </location>
</feature>
<feature type="topological domain" description="Cytoplasmic" evidence="1">
    <location>
        <begin position="102"/>
        <end position="111"/>
    </location>
</feature>
<feature type="transmembrane region" description="Helical" evidence="1">
    <location>
        <begin position="112"/>
        <end position="132"/>
    </location>
</feature>
<feature type="topological domain" description="Periplasmic" evidence="1">
    <location>
        <begin position="133"/>
        <end position="137"/>
    </location>
</feature>
<feature type="transmembrane region" description="Helical" evidence="1">
    <location>
        <begin position="138"/>
        <end position="158"/>
    </location>
</feature>
<feature type="topological domain" description="Cytoplasmic" evidence="1">
    <location>
        <begin position="159"/>
        <end position="205"/>
    </location>
</feature>